<sequence>MAKQIYDSMAMKRALTRMTYEIIEKNKGIDDLVLVGIKTRGVYLAQRIADRLKQLENAEVPVGQLDITLYRDDRHDASLAQDPVVNEADLGFDIKDKHVILVDDVLFTGRTIRAALDALMDIGRPKKINLAVLVDRGHRELPIRADFVGKNIPTAMDEQVAVYVDEVDGKDGIELKKL</sequence>
<name>PYRR_LIGS1</name>
<comment type="function">
    <text evidence="1">Regulates transcriptional attenuation of the pyrimidine nucleotide (pyr) operon by binding in a uridine-dependent manner to specific sites on pyr mRNA. This disrupts an antiterminator hairpin in the RNA and favors formation of a downstream transcription terminator, leading to a reduced expression of downstream genes.</text>
</comment>
<comment type="function">
    <text evidence="1">Also displays a weak uracil phosphoribosyltransferase activity which is not physiologically significant.</text>
</comment>
<comment type="catalytic activity">
    <reaction evidence="1">
        <text>UMP + diphosphate = 5-phospho-alpha-D-ribose 1-diphosphate + uracil</text>
        <dbReference type="Rhea" id="RHEA:13017"/>
        <dbReference type="ChEBI" id="CHEBI:17568"/>
        <dbReference type="ChEBI" id="CHEBI:33019"/>
        <dbReference type="ChEBI" id="CHEBI:57865"/>
        <dbReference type="ChEBI" id="CHEBI:58017"/>
        <dbReference type="EC" id="2.4.2.9"/>
    </reaction>
</comment>
<comment type="subunit">
    <text evidence="1">Homodimer and homohexamer; in equilibrium.</text>
</comment>
<comment type="similarity">
    <text evidence="1">Belongs to the purine/pyrimidine phosphoribosyltransferase family. PyrR subfamily.</text>
</comment>
<organism>
    <name type="scientific">Ligilactobacillus salivarius (strain UCC118)</name>
    <name type="common">Lactobacillus salivarius</name>
    <dbReference type="NCBI Taxonomy" id="362948"/>
    <lineage>
        <taxon>Bacteria</taxon>
        <taxon>Bacillati</taxon>
        <taxon>Bacillota</taxon>
        <taxon>Bacilli</taxon>
        <taxon>Lactobacillales</taxon>
        <taxon>Lactobacillaceae</taxon>
        <taxon>Ligilactobacillus</taxon>
    </lineage>
</organism>
<feature type="chain" id="PRO_1000053842" description="Bifunctional protein PyrR">
    <location>
        <begin position="1"/>
        <end position="178"/>
    </location>
</feature>
<feature type="short sequence motif" description="PRPP-binding" evidence="1">
    <location>
        <begin position="99"/>
        <end position="111"/>
    </location>
</feature>
<protein>
    <recommendedName>
        <fullName evidence="1">Bifunctional protein PyrR</fullName>
    </recommendedName>
    <domain>
        <recommendedName>
            <fullName evidence="1">Pyrimidine operon regulatory protein</fullName>
        </recommendedName>
    </domain>
    <domain>
        <recommendedName>
            <fullName evidence="1">Uracil phosphoribosyltransferase</fullName>
            <shortName evidence="1">UPRTase</shortName>
            <ecNumber evidence="1">2.4.2.9</ecNumber>
        </recommendedName>
    </domain>
</protein>
<reference key="1">
    <citation type="journal article" date="2006" name="Proc. Natl. Acad. Sci. U.S.A.">
        <title>Multireplicon genome architecture of Lactobacillus salivarius.</title>
        <authorList>
            <person name="Claesson M.J."/>
            <person name="Li Y."/>
            <person name="Leahy S."/>
            <person name="Canchaya C."/>
            <person name="van Pijkeren J.P."/>
            <person name="Cerdeno-Tarraga A.M."/>
            <person name="Parkhill J."/>
            <person name="Flynn S."/>
            <person name="O'Sullivan G.C."/>
            <person name="Collins J.K."/>
            <person name="Higgins D."/>
            <person name="Shanahan F."/>
            <person name="Fitzgerald G.F."/>
            <person name="van Sinderen D."/>
            <person name="O'Toole P.W."/>
        </authorList>
    </citation>
    <scope>NUCLEOTIDE SEQUENCE [LARGE SCALE GENOMIC DNA]</scope>
    <source>
        <strain>UCC118</strain>
    </source>
</reference>
<keyword id="KW-0328">Glycosyltransferase</keyword>
<keyword id="KW-1185">Reference proteome</keyword>
<keyword id="KW-0694">RNA-binding</keyword>
<keyword id="KW-0804">Transcription</keyword>
<keyword id="KW-0805">Transcription regulation</keyword>
<keyword id="KW-0806">Transcription termination</keyword>
<keyword id="KW-0808">Transferase</keyword>
<evidence type="ECO:0000255" key="1">
    <source>
        <dbReference type="HAMAP-Rule" id="MF_01219"/>
    </source>
</evidence>
<gene>
    <name evidence="1" type="primary">pyrR</name>
    <name type="ordered locus">LSL_0827</name>
</gene>
<accession>Q1WTX5</accession>
<proteinExistence type="inferred from homology"/>
<dbReference type="EC" id="2.4.2.9" evidence="1"/>
<dbReference type="EMBL" id="CP000233">
    <property type="protein sequence ID" value="ABD99637.1"/>
    <property type="molecule type" value="Genomic_DNA"/>
</dbReference>
<dbReference type="RefSeq" id="WP_003704375.1">
    <property type="nucleotide sequence ID" value="NC_007929.1"/>
</dbReference>
<dbReference type="RefSeq" id="YP_535720.1">
    <property type="nucleotide sequence ID" value="NC_007929.1"/>
</dbReference>
<dbReference type="SMR" id="Q1WTX5"/>
<dbReference type="STRING" id="362948.LSL_0827"/>
<dbReference type="GeneID" id="89465609"/>
<dbReference type="KEGG" id="lsl:LSL_0827"/>
<dbReference type="PATRIC" id="fig|362948.14.peg.901"/>
<dbReference type="HOGENOM" id="CLU_094234_2_1_9"/>
<dbReference type="OrthoDB" id="9802227at2"/>
<dbReference type="Proteomes" id="UP000006559">
    <property type="component" value="Chromosome"/>
</dbReference>
<dbReference type="GO" id="GO:0003723">
    <property type="term" value="F:RNA binding"/>
    <property type="evidence" value="ECO:0007669"/>
    <property type="project" value="UniProtKB-UniRule"/>
</dbReference>
<dbReference type="GO" id="GO:0004845">
    <property type="term" value="F:uracil phosphoribosyltransferase activity"/>
    <property type="evidence" value="ECO:0007669"/>
    <property type="project" value="UniProtKB-UniRule"/>
</dbReference>
<dbReference type="GO" id="GO:0006353">
    <property type="term" value="P:DNA-templated transcription termination"/>
    <property type="evidence" value="ECO:0007669"/>
    <property type="project" value="UniProtKB-UniRule"/>
</dbReference>
<dbReference type="CDD" id="cd06223">
    <property type="entry name" value="PRTases_typeI"/>
    <property type="match status" value="1"/>
</dbReference>
<dbReference type="FunFam" id="3.40.50.2020:FF:000020">
    <property type="entry name" value="Bifunctional protein PyrR"/>
    <property type="match status" value="1"/>
</dbReference>
<dbReference type="Gene3D" id="3.40.50.2020">
    <property type="match status" value="1"/>
</dbReference>
<dbReference type="HAMAP" id="MF_01219">
    <property type="entry name" value="PyrR"/>
    <property type="match status" value="1"/>
</dbReference>
<dbReference type="InterPro" id="IPR000836">
    <property type="entry name" value="PRibTrfase_dom"/>
</dbReference>
<dbReference type="InterPro" id="IPR029057">
    <property type="entry name" value="PRTase-like"/>
</dbReference>
<dbReference type="InterPro" id="IPR023050">
    <property type="entry name" value="PyrR"/>
</dbReference>
<dbReference type="InterPro" id="IPR050137">
    <property type="entry name" value="PyrR_bifunctional"/>
</dbReference>
<dbReference type="NCBIfam" id="NF003545">
    <property type="entry name" value="PRK05205.1-1"/>
    <property type="match status" value="1"/>
</dbReference>
<dbReference type="NCBIfam" id="NF003548">
    <property type="entry name" value="PRK05205.1-4"/>
    <property type="match status" value="1"/>
</dbReference>
<dbReference type="NCBIfam" id="NF003549">
    <property type="entry name" value="PRK05205.1-5"/>
    <property type="match status" value="1"/>
</dbReference>
<dbReference type="PANTHER" id="PTHR11608">
    <property type="entry name" value="BIFUNCTIONAL PROTEIN PYRR"/>
    <property type="match status" value="1"/>
</dbReference>
<dbReference type="PANTHER" id="PTHR11608:SF0">
    <property type="entry name" value="BIFUNCTIONAL PROTEIN PYRR"/>
    <property type="match status" value="1"/>
</dbReference>
<dbReference type="Pfam" id="PF00156">
    <property type="entry name" value="Pribosyltran"/>
    <property type="match status" value="1"/>
</dbReference>
<dbReference type="SUPFAM" id="SSF53271">
    <property type="entry name" value="PRTase-like"/>
    <property type="match status" value="1"/>
</dbReference>